<comment type="function">
    <text evidence="1">Binds to DNA and alters its conformation. May be involved in regulation of gene expression, nucleoid organization and DNA protection.</text>
</comment>
<comment type="subunit">
    <text evidence="1">Homodimer.</text>
</comment>
<comment type="subcellular location">
    <subcellularLocation>
        <location evidence="1">Cytoplasm</location>
        <location evidence="1">Nucleoid</location>
    </subcellularLocation>
</comment>
<comment type="similarity">
    <text evidence="1">Belongs to the YbaB/EbfC family.</text>
</comment>
<gene>
    <name type="ordered locus">Pnec_0645</name>
</gene>
<name>Y645_POLNS</name>
<organism>
    <name type="scientific">Polynucleobacter necessarius subsp. necessarius (strain STIR1)</name>
    <dbReference type="NCBI Taxonomy" id="452638"/>
    <lineage>
        <taxon>Bacteria</taxon>
        <taxon>Pseudomonadati</taxon>
        <taxon>Pseudomonadota</taxon>
        <taxon>Betaproteobacteria</taxon>
        <taxon>Burkholderiales</taxon>
        <taxon>Burkholderiaceae</taxon>
        <taxon>Polynucleobacter</taxon>
    </lineage>
</organism>
<dbReference type="EMBL" id="CP001010">
    <property type="protein sequence ID" value="ACB43890.1"/>
    <property type="molecule type" value="Genomic_DNA"/>
</dbReference>
<dbReference type="SMR" id="B1XU63"/>
<dbReference type="STRING" id="452638.Pnec_0645"/>
<dbReference type="KEGG" id="pne:Pnec_0645"/>
<dbReference type="eggNOG" id="COG0718">
    <property type="taxonomic scope" value="Bacteria"/>
</dbReference>
<dbReference type="HOGENOM" id="CLU_140930_0_0_4"/>
<dbReference type="OrthoDB" id="9808738at2"/>
<dbReference type="GO" id="GO:0043590">
    <property type="term" value="C:bacterial nucleoid"/>
    <property type="evidence" value="ECO:0007669"/>
    <property type="project" value="UniProtKB-UniRule"/>
</dbReference>
<dbReference type="GO" id="GO:0005829">
    <property type="term" value="C:cytosol"/>
    <property type="evidence" value="ECO:0007669"/>
    <property type="project" value="TreeGrafter"/>
</dbReference>
<dbReference type="GO" id="GO:0003677">
    <property type="term" value="F:DNA binding"/>
    <property type="evidence" value="ECO:0007669"/>
    <property type="project" value="UniProtKB-UniRule"/>
</dbReference>
<dbReference type="Gene3D" id="3.30.1310.10">
    <property type="entry name" value="Nucleoid-associated protein YbaB-like domain"/>
    <property type="match status" value="1"/>
</dbReference>
<dbReference type="HAMAP" id="MF_00274">
    <property type="entry name" value="DNA_YbaB_EbfC"/>
    <property type="match status" value="1"/>
</dbReference>
<dbReference type="InterPro" id="IPR036894">
    <property type="entry name" value="YbaB-like_sf"/>
</dbReference>
<dbReference type="InterPro" id="IPR004401">
    <property type="entry name" value="YbaB/EbfC"/>
</dbReference>
<dbReference type="NCBIfam" id="TIGR00103">
    <property type="entry name" value="DNA_YbaB_EbfC"/>
    <property type="match status" value="1"/>
</dbReference>
<dbReference type="PANTHER" id="PTHR33449">
    <property type="entry name" value="NUCLEOID-ASSOCIATED PROTEIN YBAB"/>
    <property type="match status" value="1"/>
</dbReference>
<dbReference type="PANTHER" id="PTHR33449:SF1">
    <property type="entry name" value="NUCLEOID-ASSOCIATED PROTEIN YBAB"/>
    <property type="match status" value="1"/>
</dbReference>
<dbReference type="Pfam" id="PF02575">
    <property type="entry name" value="YbaB_DNA_bd"/>
    <property type="match status" value="1"/>
</dbReference>
<dbReference type="PIRSF" id="PIRSF004555">
    <property type="entry name" value="UCP004555"/>
    <property type="match status" value="1"/>
</dbReference>
<dbReference type="SUPFAM" id="SSF82607">
    <property type="entry name" value="YbaB-like"/>
    <property type="match status" value="1"/>
</dbReference>
<evidence type="ECO:0000255" key="1">
    <source>
        <dbReference type="HAMAP-Rule" id="MF_00274"/>
    </source>
</evidence>
<keyword id="KW-0963">Cytoplasm</keyword>
<keyword id="KW-0238">DNA-binding</keyword>
<accession>B1XU63</accession>
<feature type="chain" id="PRO_1000114631" description="Nucleoid-associated protein Pnec_0645">
    <location>
        <begin position="1"/>
        <end position="107"/>
    </location>
</feature>
<proteinExistence type="inferred from homology"/>
<sequence>MMKGGLAGLMKQAQQMQEKMKTTQAELAALEVTGQAAGGLVKVTISGKYELKRVQIDPGAMDDREMLEDLIVTAYTEAFKQVEAASAQMMSGATAGMPMPPGFKLPF</sequence>
<protein>
    <recommendedName>
        <fullName evidence="1">Nucleoid-associated protein Pnec_0645</fullName>
    </recommendedName>
</protein>
<reference key="1">
    <citation type="journal article" date="2013" name="Proc. Natl. Acad. Sci. U.S.A.">
        <title>Polynucleobacter necessarius, a model for genome reduction in both free-living and symbiotic bacteria.</title>
        <authorList>
            <person name="Boscaro V."/>
            <person name="Felletti M."/>
            <person name="Vannini C."/>
            <person name="Ackerman M.S."/>
            <person name="Chain P.S."/>
            <person name="Malfatti S."/>
            <person name="Vergez L.M."/>
            <person name="Shin M."/>
            <person name="Doak T.G."/>
            <person name="Lynch M."/>
            <person name="Petroni G."/>
        </authorList>
    </citation>
    <scope>NUCLEOTIDE SEQUENCE [LARGE SCALE GENOMIC DNA]</scope>
    <source>
        <strain>STIR1</strain>
    </source>
</reference>